<feature type="chain" id="PRO_0000405589" description="Large ribosomal subunit protein eL18">
    <location>
        <begin position="1"/>
        <end position="188"/>
    </location>
</feature>
<feature type="region of interest" description="Disordered" evidence="3">
    <location>
        <begin position="151"/>
        <end position="188"/>
    </location>
</feature>
<feature type="compositionally biased region" description="Basic residues" evidence="3">
    <location>
        <begin position="161"/>
        <end position="171"/>
    </location>
</feature>
<feature type="compositionally biased region" description="Basic residues" evidence="3">
    <location>
        <begin position="178"/>
        <end position="188"/>
    </location>
</feature>
<feature type="modified residue" description="Phosphoserine" evidence="1">
    <location>
        <position position="130"/>
    </location>
</feature>
<feature type="modified residue" description="Phosphothreonine" evidence="1">
    <location>
        <position position="158"/>
    </location>
</feature>
<feature type="cross-link" description="Glycyl lysine isopeptide (Lys-Gly) (interchain with G-Cter in SUMO2)" evidence="1">
    <location>
        <position position="119"/>
    </location>
</feature>
<feature type="cross-link" description="Glycyl lysine isopeptide (Lys-Gly) (interchain with G-Cter in SUMO2)" evidence="1">
    <location>
        <position position="164"/>
    </location>
</feature>
<feature type="sequence conflict" description="In Ref. 2; ABD77168." evidence="4" ref="2">
    <original>K</original>
    <variation>M</variation>
    <location>
        <position position="30"/>
    </location>
</feature>
<organism>
    <name type="scientific">Canis lupus familiaris</name>
    <name type="common">Dog</name>
    <name type="synonym">Canis familiaris</name>
    <dbReference type="NCBI Taxonomy" id="9615"/>
    <lineage>
        <taxon>Eukaryota</taxon>
        <taxon>Metazoa</taxon>
        <taxon>Chordata</taxon>
        <taxon>Craniata</taxon>
        <taxon>Vertebrata</taxon>
        <taxon>Euteleostomi</taxon>
        <taxon>Mammalia</taxon>
        <taxon>Eutheria</taxon>
        <taxon>Laurasiatheria</taxon>
        <taxon>Carnivora</taxon>
        <taxon>Caniformia</taxon>
        <taxon>Canidae</taxon>
        <taxon>Canis</taxon>
    </lineage>
</organism>
<protein>
    <recommendedName>
        <fullName evidence="4">Large ribosomal subunit protein eL18</fullName>
    </recommendedName>
    <alternativeName>
        <fullName>Ribosomal protein L18</fullName>
    </alternativeName>
</protein>
<gene>
    <name type="primary">RPL18</name>
</gene>
<comment type="function">
    <text evidence="1">Component of the large ribosomal subunit. The ribosome is a large ribonucleoprotein complex responsible for the synthesis of proteins in the cell.</text>
</comment>
<comment type="subunit">
    <text evidence="1">Component of the large ribosomal subunit.</text>
</comment>
<comment type="subcellular location">
    <subcellularLocation>
        <location evidence="1">Cytoplasm</location>
        <location evidence="1">Cytosol</location>
    </subcellularLocation>
    <subcellularLocation>
        <location evidence="1">Cytoplasm</location>
    </subcellularLocation>
    <subcellularLocation>
        <location evidence="2">Rough endoplasmic reticulum</location>
    </subcellularLocation>
    <text evidence="1 2">Detected on cytosolic polysomes (By similarity). Detected in ribosomes that are associated with the rough endoplasmic reticulum (By similarity).</text>
</comment>
<comment type="similarity">
    <text evidence="4">Belongs to the eukaryotic ribosomal protein eL18 family.</text>
</comment>
<dbReference type="EMBL" id="DQ403035">
    <property type="protein sequence ID" value="ABD77168.1"/>
    <property type="molecule type" value="mRNA"/>
</dbReference>
<dbReference type="RefSeq" id="NP_001238887.1">
    <property type="nucleotide sequence ID" value="NM_001251958.1"/>
</dbReference>
<dbReference type="PDB" id="4V5Z">
    <property type="method" value="EM"/>
    <property type="resolution" value="8.70 A"/>
    <property type="chains" value="o=1-188"/>
</dbReference>
<dbReference type="PDBsum" id="4V5Z"/>
<dbReference type="SMR" id="D0VWQ3"/>
<dbReference type="FunCoup" id="D0VWQ3">
    <property type="interactions" value="1636"/>
</dbReference>
<dbReference type="STRING" id="9615.ENSCAFP00000048715"/>
<dbReference type="PaxDb" id="9612-ENSCAFP00000005899"/>
<dbReference type="Ensembl" id="ENSCAFT00000006369.5">
    <property type="protein sequence ID" value="ENSCAFP00000005899.3"/>
    <property type="gene ID" value="ENSCAFG00000003967.5"/>
</dbReference>
<dbReference type="Ensembl" id="ENSCAFT00000080568.2">
    <property type="protein sequence ID" value="ENSCAFP00000056232.1"/>
    <property type="gene ID" value="ENSCAFG00000003967.5"/>
</dbReference>
<dbReference type="Ensembl" id="ENSCAFT00030023061.1">
    <property type="protein sequence ID" value="ENSCAFP00030020119.1"/>
    <property type="gene ID" value="ENSCAFG00030012390.1"/>
</dbReference>
<dbReference type="Ensembl" id="ENSCAFT00030023298.1">
    <property type="protein sequence ID" value="ENSCAFP00030020312.1"/>
    <property type="gene ID" value="ENSCAFG00030012390.1"/>
</dbReference>
<dbReference type="Ensembl" id="ENSCAFT00040002312.1">
    <property type="protein sequence ID" value="ENSCAFP00040001974.1"/>
    <property type="gene ID" value="ENSCAFG00040001231.1"/>
</dbReference>
<dbReference type="Ensembl" id="ENSCAFT00040002342.1">
    <property type="protein sequence ID" value="ENSCAFP00040002002.1"/>
    <property type="gene ID" value="ENSCAFG00040001231.1"/>
</dbReference>
<dbReference type="Ensembl" id="ENSCAFT00845001749.1">
    <property type="protein sequence ID" value="ENSCAFP00845001381.1"/>
    <property type="gene ID" value="ENSCAFG00845001007.1"/>
</dbReference>
<dbReference type="Ensembl" id="ENSCAFT00845001766.1">
    <property type="protein sequence ID" value="ENSCAFP00845001393.1"/>
    <property type="gene ID" value="ENSCAFG00845001007.1"/>
</dbReference>
<dbReference type="GeneID" id="476422"/>
<dbReference type="KEGG" id="cfa:476422"/>
<dbReference type="CTD" id="6141"/>
<dbReference type="VEuPathDB" id="HostDB:ENSCAFG00845001007"/>
<dbReference type="VGNC" id="VGNC:45714">
    <property type="gene designation" value="RPL18"/>
</dbReference>
<dbReference type="eggNOG" id="KOG1714">
    <property type="taxonomic scope" value="Eukaryota"/>
</dbReference>
<dbReference type="GeneTree" id="ENSGT00390000012976"/>
<dbReference type="HOGENOM" id="CLU_080024_0_0_1"/>
<dbReference type="InParanoid" id="D0VWQ3"/>
<dbReference type="OMA" id="IDICHKN"/>
<dbReference type="OrthoDB" id="6600at33554"/>
<dbReference type="TreeFam" id="TF300202"/>
<dbReference type="Reactome" id="R-CFA-156827">
    <property type="pathway name" value="L13a-mediated translational silencing of Ceruloplasmin expression"/>
</dbReference>
<dbReference type="Reactome" id="R-CFA-1799339">
    <property type="pathway name" value="SRP-dependent cotranslational protein targeting to membrane"/>
</dbReference>
<dbReference type="Reactome" id="R-CFA-6791226">
    <property type="pathway name" value="Major pathway of rRNA processing in the nucleolus and cytosol"/>
</dbReference>
<dbReference type="Reactome" id="R-CFA-72689">
    <property type="pathway name" value="Formation of a pool of free 40S subunits"/>
</dbReference>
<dbReference type="Reactome" id="R-CFA-72706">
    <property type="pathway name" value="GTP hydrolysis and joining of the 60S ribosomal subunit"/>
</dbReference>
<dbReference type="Reactome" id="R-CFA-975956">
    <property type="pathway name" value="Nonsense Mediated Decay (NMD) independent of the Exon Junction Complex (EJC)"/>
</dbReference>
<dbReference type="Reactome" id="R-CFA-975957">
    <property type="pathway name" value="Nonsense Mediated Decay (NMD) enhanced by the Exon Junction Complex (EJC)"/>
</dbReference>
<dbReference type="Proteomes" id="UP000002254">
    <property type="component" value="Chromosome 1"/>
</dbReference>
<dbReference type="Proteomes" id="UP000694429">
    <property type="component" value="Chromosome 1"/>
</dbReference>
<dbReference type="Proteomes" id="UP000694542">
    <property type="component" value="Chromosome 1"/>
</dbReference>
<dbReference type="Proteomes" id="UP000805418">
    <property type="component" value="Chromosome 1"/>
</dbReference>
<dbReference type="Bgee" id="ENSCAFG00000003967">
    <property type="expression patterns" value="Expressed in ovary and 50 other cell types or tissues"/>
</dbReference>
<dbReference type="GO" id="GO:0022625">
    <property type="term" value="C:cytosolic large ribosomal subunit"/>
    <property type="evidence" value="ECO:0000250"/>
    <property type="project" value="UniProtKB"/>
</dbReference>
<dbReference type="GO" id="GO:0005791">
    <property type="term" value="C:rough endoplasmic reticulum"/>
    <property type="evidence" value="ECO:0007669"/>
    <property type="project" value="UniProtKB-SubCell"/>
</dbReference>
<dbReference type="GO" id="GO:0003723">
    <property type="term" value="F:RNA binding"/>
    <property type="evidence" value="ECO:0000318"/>
    <property type="project" value="GO_Central"/>
</dbReference>
<dbReference type="GO" id="GO:0003735">
    <property type="term" value="F:structural constituent of ribosome"/>
    <property type="evidence" value="ECO:0000318"/>
    <property type="project" value="GO_Central"/>
</dbReference>
<dbReference type="GO" id="GO:0002181">
    <property type="term" value="P:cytoplasmic translation"/>
    <property type="evidence" value="ECO:0000250"/>
    <property type="project" value="UniProtKB"/>
</dbReference>
<dbReference type="FunFam" id="3.100.10.10:FF:000001">
    <property type="entry name" value="60S ribosomal protein L18"/>
    <property type="match status" value="1"/>
</dbReference>
<dbReference type="Gene3D" id="3.100.10.10">
    <property type="match status" value="1"/>
</dbReference>
<dbReference type="InterPro" id="IPR000039">
    <property type="entry name" value="Ribosomal_eL18"/>
</dbReference>
<dbReference type="InterPro" id="IPR021132">
    <property type="entry name" value="Ribosomal_eL18/eL18-A/B/_CS"/>
</dbReference>
<dbReference type="InterPro" id="IPR021131">
    <property type="entry name" value="Ribosomal_uL15/eL18"/>
</dbReference>
<dbReference type="InterPro" id="IPR036227">
    <property type="entry name" value="Ribosomal_uL15/eL18_sf"/>
</dbReference>
<dbReference type="PANTHER" id="PTHR10934">
    <property type="entry name" value="60S RIBOSOMAL PROTEIN L18"/>
    <property type="match status" value="1"/>
</dbReference>
<dbReference type="PANTHER" id="PTHR10934:SF2">
    <property type="entry name" value="LARGE RIBOSOMAL SUBUNIT PROTEIN EL18"/>
    <property type="match status" value="1"/>
</dbReference>
<dbReference type="Pfam" id="PF17135">
    <property type="entry name" value="Ribosomal_L18"/>
    <property type="match status" value="1"/>
</dbReference>
<dbReference type="SUPFAM" id="SSF52080">
    <property type="entry name" value="Ribosomal proteins L15p and L18e"/>
    <property type="match status" value="1"/>
</dbReference>
<dbReference type="PROSITE" id="PS01106">
    <property type="entry name" value="RIBOSOMAL_L18E"/>
    <property type="match status" value="1"/>
</dbReference>
<keyword id="KW-0002">3D-structure</keyword>
<keyword id="KW-0963">Cytoplasm</keyword>
<keyword id="KW-0256">Endoplasmic reticulum</keyword>
<keyword id="KW-1017">Isopeptide bond</keyword>
<keyword id="KW-0597">Phosphoprotein</keyword>
<keyword id="KW-1185">Reference proteome</keyword>
<keyword id="KW-0687">Ribonucleoprotein</keyword>
<keyword id="KW-0689">Ribosomal protein</keyword>
<keyword id="KW-0832">Ubl conjugation</keyword>
<sequence length="188" mass="21592">MGVDIRHNKDRKVRRKEPKSQDIYLRLLVKLYRFLARRTNSTFNQVVLKRLFMSRTNRPPLSLSRMIRKMKLPGRENKTAVVVGTITDDVRVQEVPKLKVCALRVSSRARSRILKAGGKILTFDQLALDSPKGCGTVLLSGPRKGREVYRHFGKAPGTPHSHTKPYVRSKGRKFERARGRRASRGYKN</sequence>
<proteinExistence type="evidence at protein level"/>
<name>RL18_CANLF</name>
<reference key="1">
    <citation type="journal article" date="2005" name="Nature">
        <title>Genome sequence, comparative analysis and haplotype structure of the domestic dog.</title>
        <authorList>
            <person name="Lindblad-Toh K."/>
            <person name="Wade C.M."/>
            <person name="Mikkelsen T.S."/>
            <person name="Karlsson E.K."/>
            <person name="Jaffe D.B."/>
            <person name="Kamal M."/>
            <person name="Clamp M."/>
            <person name="Chang J.L."/>
            <person name="Kulbokas E.J. III"/>
            <person name="Zody M.C."/>
            <person name="Mauceli E."/>
            <person name="Xie X."/>
            <person name="Breen M."/>
            <person name="Wayne R.K."/>
            <person name="Ostrander E.A."/>
            <person name="Ponting C.P."/>
            <person name="Galibert F."/>
            <person name="Smith D.R."/>
            <person name="deJong P.J."/>
            <person name="Kirkness E.F."/>
            <person name="Alvarez P."/>
            <person name="Biagi T."/>
            <person name="Brockman W."/>
            <person name="Butler J."/>
            <person name="Chin C.-W."/>
            <person name="Cook A."/>
            <person name="Cuff J."/>
            <person name="Daly M.J."/>
            <person name="DeCaprio D."/>
            <person name="Gnerre S."/>
            <person name="Grabherr M."/>
            <person name="Kellis M."/>
            <person name="Kleber M."/>
            <person name="Bardeleben C."/>
            <person name="Goodstadt L."/>
            <person name="Heger A."/>
            <person name="Hitte C."/>
            <person name="Kim L."/>
            <person name="Koepfli K.-P."/>
            <person name="Parker H.G."/>
            <person name="Pollinger J.P."/>
            <person name="Searle S.M.J."/>
            <person name="Sutter N.B."/>
            <person name="Thomas R."/>
            <person name="Webber C."/>
            <person name="Baldwin J."/>
            <person name="Abebe A."/>
            <person name="Abouelleil A."/>
            <person name="Aftuck L."/>
            <person name="Ait-Zahra M."/>
            <person name="Aldredge T."/>
            <person name="Allen N."/>
            <person name="An P."/>
            <person name="Anderson S."/>
            <person name="Antoine C."/>
            <person name="Arachchi H."/>
            <person name="Aslam A."/>
            <person name="Ayotte L."/>
            <person name="Bachantsang P."/>
            <person name="Barry A."/>
            <person name="Bayul T."/>
            <person name="Benamara M."/>
            <person name="Berlin A."/>
            <person name="Bessette D."/>
            <person name="Blitshteyn B."/>
            <person name="Bloom T."/>
            <person name="Blye J."/>
            <person name="Boguslavskiy L."/>
            <person name="Bonnet C."/>
            <person name="Boukhgalter B."/>
            <person name="Brown A."/>
            <person name="Cahill P."/>
            <person name="Calixte N."/>
            <person name="Camarata J."/>
            <person name="Cheshatsang Y."/>
            <person name="Chu J."/>
            <person name="Citroen M."/>
            <person name="Collymore A."/>
            <person name="Cooke P."/>
            <person name="Dawoe T."/>
            <person name="Daza R."/>
            <person name="Decktor K."/>
            <person name="DeGray S."/>
            <person name="Dhargay N."/>
            <person name="Dooley K."/>
            <person name="Dooley K."/>
            <person name="Dorje P."/>
            <person name="Dorjee K."/>
            <person name="Dorris L."/>
            <person name="Duffey N."/>
            <person name="Dupes A."/>
            <person name="Egbiremolen O."/>
            <person name="Elong R."/>
            <person name="Falk J."/>
            <person name="Farina A."/>
            <person name="Faro S."/>
            <person name="Ferguson D."/>
            <person name="Ferreira P."/>
            <person name="Fisher S."/>
            <person name="FitzGerald M."/>
            <person name="Foley K."/>
            <person name="Foley C."/>
            <person name="Franke A."/>
            <person name="Friedrich D."/>
            <person name="Gage D."/>
            <person name="Garber M."/>
            <person name="Gearin G."/>
            <person name="Giannoukos G."/>
            <person name="Goode T."/>
            <person name="Goyette A."/>
            <person name="Graham J."/>
            <person name="Grandbois E."/>
            <person name="Gyaltsen K."/>
            <person name="Hafez N."/>
            <person name="Hagopian D."/>
            <person name="Hagos B."/>
            <person name="Hall J."/>
            <person name="Healy C."/>
            <person name="Hegarty R."/>
            <person name="Honan T."/>
            <person name="Horn A."/>
            <person name="Houde N."/>
            <person name="Hughes L."/>
            <person name="Hunnicutt L."/>
            <person name="Husby M."/>
            <person name="Jester B."/>
            <person name="Jones C."/>
            <person name="Kamat A."/>
            <person name="Kanga B."/>
            <person name="Kells C."/>
            <person name="Khazanovich D."/>
            <person name="Kieu A.C."/>
            <person name="Kisner P."/>
            <person name="Kumar M."/>
            <person name="Lance K."/>
            <person name="Landers T."/>
            <person name="Lara M."/>
            <person name="Lee W."/>
            <person name="Leger J.-P."/>
            <person name="Lennon N."/>
            <person name="Leuper L."/>
            <person name="LeVine S."/>
            <person name="Liu J."/>
            <person name="Liu X."/>
            <person name="Lokyitsang Y."/>
            <person name="Lokyitsang T."/>
            <person name="Lui A."/>
            <person name="Macdonald J."/>
            <person name="Major J."/>
            <person name="Marabella R."/>
            <person name="Maru K."/>
            <person name="Matthews C."/>
            <person name="McDonough S."/>
            <person name="Mehta T."/>
            <person name="Meldrim J."/>
            <person name="Melnikov A."/>
            <person name="Meneus L."/>
            <person name="Mihalev A."/>
            <person name="Mihova T."/>
            <person name="Miller K."/>
            <person name="Mittelman R."/>
            <person name="Mlenga V."/>
            <person name="Mulrain L."/>
            <person name="Munson G."/>
            <person name="Navidi A."/>
            <person name="Naylor J."/>
            <person name="Nguyen T."/>
            <person name="Nguyen N."/>
            <person name="Nguyen C."/>
            <person name="Nguyen T."/>
            <person name="Nicol R."/>
            <person name="Norbu N."/>
            <person name="Norbu C."/>
            <person name="Novod N."/>
            <person name="Nyima T."/>
            <person name="Olandt P."/>
            <person name="O'Neill B."/>
            <person name="O'Neill K."/>
            <person name="Osman S."/>
            <person name="Oyono L."/>
            <person name="Patti C."/>
            <person name="Perrin D."/>
            <person name="Phunkhang P."/>
            <person name="Pierre F."/>
            <person name="Priest M."/>
            <person name="Rachupka A."/>
            <person name="Raghuraman S."/>
            <person name="Rameau R."/>
            <person name="Ray V."/>
            <person name="Raymond C."/>
            <person name="Rege F."/>
            <person name="Rise C."/>
            <person name="Rogers J."/>
            <person name="Rogov P."/>
            <person name="Sahalie J."/>
            <person name="Settipalli S."/>
            <person name="Sharpe T."/>
            <person name="Shea T."/>
            <person name="Sheehan M."/>
            <person name="Sherpa N."/>
            <person name="Shi J."/>
            <person name="Shih D."/>
            <person name="Sloan J."/>
            <person name="Smith C."/>
            <person name="Sparrow T."/>
            <person name="Stalker J."/>
            <person name="Stange-Thomann N."/>
            <person name="Stavropoulos S."/>
            <person name="Stone C."/>
            <person name="Stone S."/>
            <person name="Sykes S."/>
            <person name="Tchuinga P."/>
            <person name="Tenzing P."/>
            <person name="Tesfaye S."/>
            <person name="Thoulutsang D."/>
            <person name="Thoulutsang Y."/>
            <person name="Topham K."/>
            <person name="Topping I."/>
            <person name="Tsamla T."/>
            <person name="Vassiliev H."/>
            <person name="Venkataraman V."/>
            <person name="Vo A."/>
            <person name="Wangchuk T."/>
            <person name="Wangdi T."/>
            <person name="Weiand M."/>
            <person name="Wilkinson J."/>
            <person name="Wilson A."/>
            <person name="Yadav S."/>
            <person name="Yang S."/>
            <person name="Yang X."/>
            <person name="Young G."/>
            <person name="Yu Q."/>
            <person name="Zainoun J."/>
            <person name="Zembek L."/>
            <person name="Zimmer A."/>
            <person name="Lander E.S."/>
        </authorList>
    </citation>
    <scope>NUCLEOTIDE SEQUENCE [LARGE SCALE GENOMIC DNA]</scope>
    <source>
        <strain>Boxer</strain>
    </source>
</reference>
<reference key="2">
    <citation type="journal article" date="2006" name="Mol. Biol. Evol.">
        <title>Housekeeping genes for phylogenetic analysis of eutherian relationships.</title>
        <authorList>
            <person name="Kullberg M."/>
            <person name="Nilsson M.A."/>
            <person name="Arnason U."/>
            <person name="Harley E.H."/>
            <person name="Janke A."/>
        </authorList>
    </citation>
    <scope>NUCLEOTIDE SEQUENCE [MRNA] OF 24-187</scope>
    <source>
        <tissue>Liver</tissue>
    </source>
</reference>
<reference key="3">
    <citation type="journal article" date="2008" name="Structure">
        <title>Structure of the mammalian 80S ribosome at 8.7 A resolution.</title>
        <authorList>
            <person name="Chandramouli P."/>
            <person name="Topf M."/>
            <person name="Menetret J.F."/>
            <person name="Eswar N."/>
            <person name="Cannone J.J."/>
            <person name="Gutell R.R."/>
            <person name="Sali A."/>
            <person name="Akey C.W."/>
        </authorList>
    </citation>
    <scope>STRUCTURE BY ELECTRON MICROSCOPY (8.70 ANGSTROMS)</scope>
</reference>
<accession>D0VWQ3</accession>
<accession>Q0QEV9</accession>
<evidence type="ECO:0000250" key="1">
    <source>
        <dbReference type="UniProtKB" id="Q07020"/>
    </source>
</evidence>
<evidence type="ECO:0000250" key="2">
    <source>
        <dbReference type="UniProtKB" id="Q95342"/>
    </source>
</evidence>
<evidence type="ECO:0000256" key="3">
    <source>
        <dbReference type="SAM" id="MobiDB-lite"/>
    </source>
</evidence>
<evidence type="ECO:0000305" key="4"/>